<dbReference type="EMBL" id="AC244216">
    <property type="status" value="NOT_ANNOTATED_CDS"/>
    <property type="molecule type" value="Genomic_DNA"/>
</dbReference>
<dbReference type="EMBL" id="BC101344">
    <property type="protein sequence ID" value="AAI01345.1"/>
    <property type="molecule type" value="mRNA"/>
</dbReference>
<dbReference type="EMBL" id="BC130274">
    <property type="protein sequence ID" value="AAI30275.1"/>
    <property type="molecule type" value="mRNA"/>
</dbReference>
<dbReference type="EMBL" id="BC130276">
    <property type="protein sequence ID" value="AAI30277.1"/>
    <property type="molecule type" value="mRNA"/>
</dbReference>
<dbReference type="CCDS" id="CCDS72708.1"/>
<dbReference type="RefSeq" id="NP_001013425.2">
    <property type="nucleotide sequence ID" value="NM_001013407.5"/>
</dbReference>
<dbReference type="FunCoup" id="Q5TYX0">
    <property type="interactions" value="101"/>
</dbReference>
<dbReference type="IntAct" id="Q5TYX0">
    <property type="interactions" value="5"/>
</dbReference>
<dbReference type="STRING" id="9606.ENSP00000480122"/>
<dbReference type="GlyGen" id="Q5TYX0">
    <property type="glycosylation" value="1 site, 1 O-linked glycan (1 site)"/>
</dbReference>
<dbReference type="iPTMnet" id="Q5TYX0"/>
<dbReference type="PhosphoSitePlus" id="Q5TYX0"/>
<dbReference type="SwissPalm" id="Q5TYX0"/>
<dbReference type="BioMuta" id="PRAMEF5"/>
<dbReference type="DMDM" id="74756668"/>
<dbReference type="MassIVE" id="Q5TYX0"/>
<dbReference type="PaxDb" id="9606-ENSP00000480122"/>
<dbReference type="PeptideAtlas" id="Q5TYX0"/>
<dbReference type="ProteomicsDB" id="1564"/>
<dbReference type="Antibodypedia" id="77555">
    <property type="antibodies" value="21 antibodies from 4 providers"/>
</dbReference>
<dbReference type="DNASU" id="343068"/>
<dbReference type="Ensembl" id="ENST00000618079.5">
    <property type="protein sequence ID" value="ENSP00000478534.2"/>
    <property type="gene ID" value="ENSG00000283150.2"/>
</dbReference>
<dbReference type="Ensembl" id="ENST00000621481.4">
    <property type="protein sequence ID" value="ENSP00000482418.1"/>
    <property type="gene ID" value="ENSG00000276420.5"/>
</dbReference>
<dbReference type="Ensembl" id="ENST00000622421.3">
    <property type="protein sequence ID" value="ENSP00000480122.1"/>
    <property type="gene ID" value="ENSG00000270601.5"/>
</dbReference>
<dbReference type="Ensembl" id="ENST00000633074.1">
    <property type="protein sequence ID" value="ENSP00000488527.1"/>
    <property type="gene ID" value="ENSG00000282424.1"/>
</dbReference>
<dbReference type="GeneID" id="343068"/>
<dbReference type="KEGG" id="hsa:343068"/>
<dbReference type="MANE-Select" id="ENST00000622421.3">
    <property type="protein sequence ID" value="ENSP00000480122.1"/>
    <property type="RefSeq nucleotide sequence ID" value="NM_001013407.5"/>
    <property type="RefSeq protein sequence ID" value="NP_001013425.2"/>
</dbReference>
<dbReference type="UCSC" id="uc001auu.1">
    <property type="organism name" value="human"/>
</dbReference>
<dbReference type="AGR" id="HGNC:27995"/>
<dbReference type="CTD" id="343068"/>
<dbReference type="GeneCards" id="PRAMEF5"/>
<dbReference type="HGNC" id="HGNC:27995">
    <property type="gene designation" value="PRAMEF5"/>
</dbReference>
<dbReference type="HPA" id="ENSG00000270601">
    <property type="expression patterns" value="Not detected"/>
</dbReference>
<dbReference type="neXtProt" id="NX_Q5TYX0"/>
<dbReference type="OpenTargets" id="ENSG00000270601"/>
<dbReference type="PharmGKB" id="PA142671142"/>
<dbReference type="VEuPathDB" id="HostDB:ENSG00000270601"/>
<dbReference type="eggNOG" id="ENOG502QWSJ">
    <property type="taxonomic scope" value="Eukaryota"/>
</dbReference>
<dbReference type="GeneTree" id="ENSGT01030000234531"/>
<dbReference type="InParanoid" id="Q5TYX0"/>
<dbReference type="OMA" id="WPRRCKL"/>
<dbReference type="OrthoDB" id="9533139at2759"/>
<dbReference type="PAN-GO" id="Q5TYX0">
    <property type="GO annotations" value="1 GO annotation based on evolutionary models"/>
</dbReference>
<dbReference type="TreeFam" id="TF332708"/>
<dbReference type="PathwayCommons" id="Q5TYX0"/>
<dbReference type="SignaLink" id="Q5TYX0"/>
<dbReference type="BioGRID-ORCS" id="343068">
    <property type="hits" value="287 hits in 1027 CRISPR screens"/>
</dbReference>
<dbReference type="GenomeRNAi" id="343068"/>
<dbReference type="Pharos" id="Q5TYX0">
    <property type="development level" value="Tdark"/>
</dbReference>
<dbReference type="PRO" id="PR:Q5TYX0"/>
<dbReference type="Proteomes" id="UP000005640">
    <property type="component" value="Chromosome 1"/>
</dbReference>
<dbReference type="RNAct" id="Q5TYX0">
    <property type="molecule type" value="protein"/>
</dbReference>
<dbReference type="Bgee" id="ENSG00000270601">
    <property type="expression patterns" value="Expressed in ascending aorta"/>
</dbReference>
<dbReference type="GO" id="GO:0031462">
    <property type="term" value="C:Cul2-RING ubiquitin ligase complex"/>
    <property type="evidence" value="ECO:0000318"/>
    <property type="project" value="GO_Central"/>
</dbReference>
<dbReference type="GO" id="GO:0005737">
    <property type="term" value="C:cytoplasm"/>
    <property type="evidence" value="ECO:0000318"/>
    <property type="project" value="GO_Central"/>
</dbReference>
<dbReference type="GO" id="GO:1990756">
    <property type="term" value="F:ubiquitin-like ligase-substrate adaptor activity"/>
    <property type="evidence" value="ECO:0000318"/>
    <property type="project" value="GO_Central"/>
</dbReference>
<dbReference type="GO" id="GO:0043066">
    <property type="term" value="P:negative regulation of apoptotic process"/>
    <property type="evidence" value="ECO:0007669"/>
    <property type="project" value="InterPro"/>
</dbReference>
<dbReference type="GO" id="GO:0045596">
    <property type="term" value="P:negative regulation of cell differentiation"/>
    <property type="evidence" value="ECO:0007669"/>
    <property type="project" value="InterPro"/>
</dbReference>
<dbReference type="GO" id="GO:0045892">
    <property type="term" value="P:negative regulation of DNA-templated transcription"/>
    <property type="evidence" value="ECO:0007669"/>
    <property type="project" value="InterPro"/>
</dbReference>
<dbReference type="GO" id="GO:0008284">
    <property type="term" value="P:positive regulation of cell population proliferation"/>
    <property type="evidence" value="ECO:0007669"/>
    <property type="project" value="InterPro"/>
</dbReference>
<dbReference type="GO" id="GO:0043161">
    <property type="term" value="P:proteasome-mediated ubiquitin-dependent protein catabolic process"/>
    <property type="evidence" value="ECO:0000318"/>
    <property type="project" value="GO_Central"/>
</dbReference>
<dbReference type="FunFam" id="3.80.10.10:FF:000079">
    <property type="entry name" value="PRAME family member 18"/>
    <property type="match status" value="1"/>
</dbReference>
<dbReference type="Gene3D" id="3.80.10.10">
    <property type="entry name" value="Ribonuclease Inhibitor"/>
    <property type="match status" value="1"/>
</dbReference>
<dbReference type="InterPro" id="IPR032675">
    <property type="entry name" value="LRR_dom_sf"/>
</dbReference>
<dbReference type="InterPro" id="IPR026271">
    <property type="entry name" value="PRAME"/>
</dbReference>
<dbReference type="InterPro" id="IPR050694">
    <property type="entry name" value="PRAME_domain"/>
</dbReference>
<dbReference type="PANTHER" id="PTHR14224:SF19">
    <property type="entry name" value="PRAME FAMILY MEMBER 11-RELATED"/>
    <property type="match status" value="1"/>
</dbReference>
<dbReference type="PANTHER" id="PTHR14224">
    <property type="entry name" value="SIMILAR TO PREFERENTIALLY EXPRESSED ANTIGEN IN MELANOMA-LIKE 3"/>
    <property type="match status" value="1"/>
</dbReference>
<dbReference type="PIRSF" id="PIRSF038286">
    <property type="entry name" value="PRAME"/>
    <property type="match status" value="1"/>
</dbReference>
<dbReference type="SUPFAM" id="SSF52047">
    <property type="entry name" value="RNI-like"/>
    <property type="match status" value="1"/>
</dbReference>
<organism>
    <name type="scientific">Homo sapiens</name>
    <name type="common">Human</name>
    <dbReference type="NCBI Taxonomy" id="9606"/>
    <lineage>
        <taxon>Eukaryota</taxon>
        <taxon>Metazoa</taxon>
        <taxon>Chordata</taxon>
        <taxon>Craniata</taxon>
        <taxon>Vertebrata</taxon>
        <taxon>Euteleostomi</taxon>
        <taxon>Mammalia</taxon>
        <taxon>Eutheria</taxon>
        <taxon>Euarchontoglires</taxon>
        <taxon>Primates</taxon>
        <taxon>Haplorrhini</taxon>
        <taxon>Catarrhini</taxon>
        <taxon>Hominidae</taxon>
        <taxon>Homo</taxon>
    </lineage>
</organism>
<protein>
    <recommendedName>
        <fullName evidence="3">PRAME family member 5</fullName>
    </recommendedName>
</protein>
<sequence length="476" mass="54886">MSIRTPPRLLELAGRSLLRDQALAMSTLEELPTELFPPLFMEAFSRRRCEALKLMVQAWPFRRLPLRPLIKMPCLEAFQAVLDGLDALLTQGVHPRRWKLQVLDLQDVCENFWMVWSEAMAHGCFLNAKRNKKPVQDCPRMRGQQPLTVFVELWLKNRTLDEYLTCLLLWVKQRKDLLHLCCKKLKILGMPFRNIRSILKMVNLDCIQEVEVNCKWVLPILTQFTPYLGHMRNLQKLVLSHMDVSRYVSPEQKKEIVTQFTTQFLKLCCLQKLSMNSVSFLEGHLDQLLSCLKTSLKVLTITNCVLLESDLKHLSQCPSISQLKTLDLSGIRLTNYSLVPLQILLEKVAATLEYLDLDDCGIIDSQVNAILPALSRCFELNTFSFCGNPISMATLENLLSHTIILKNLCVELYPAPRESYDADGTLCWSRFPQIRAELMKRVRDLRHPKRILFCTDCCPDCGNRSFYDLEADQCCC</sequence>
<name>PRAM5_HUMAN</name>
<reference key="1">
    <citation type="journal article" date="2006" name="Nature">
        <title>The DNA sequence and biological annotation of human chromosome 1.</title>
        <authorList>
            <person name="Gregory S.G."/>
            <person name="Barlow K.F."/>
            <person name="McLay K.E."/>
            <person name="Kaul R."/>
            <person name="Swarbreck D."/>
            <person name="Dunham A."/>
            <person name="Scott C.E."/>
            <person name="Howe K.L."/>
            <person name="Woodfine K."/>
            <person name="Spencer C.C.A."/>
            <person name="Jones M.C."/>
            <person name="Gillson C."/>
            <person name="Searle S."/>
            <person name="Zhou Y."/>
            <person name="Kokocinski F."/>
            <person name="McDonald L."/>
            <person name="Evans R."/>
            <person name="Phillips K."/>
            <person name="Atkinson A."/>
            <person name="Cooper R."/>
            <person name="Jones C."/>
            <person name="Hall R.E."/>
            <person name="Andrews T.D."/>
            <person name="Lloyd C."/>
            <person name="Ainscough R."/>
            <person name="Almeida J.P."/>
            <person name="Ambrose K.D."/>
            <person name="Anderson F."/>
            <person name="Andrew R.W."/>
            <person name="Ashwell R.I.S."/>
            <person name="Aubin K."/>
            <person name="Babbage A.K."/>
            <person name="Bagguley C.L."/>
            <person name="Bailey J."/>
            <person name="Beasley H."/>
            <person name="Bethel G."/>
            <person name="Bird C.P."/>
            <person name="Bray-Allen S."/>
            <person name="Brown J.Y."/>
            <person name="Brown A.J."/>
            <person name="Buckley D."/>
            <person name="Burton J."/>
            <person name="Bye J."/>
            <person name="Carder C."/>
            <person name="Chapman J.C."/>
            <person name="Clark S.Y."/>
            <person name="Clarke G."/>
            <person name="Clee C."/>
            <person name="Cobley V."/>
            <person name="Collier R.E."/>
            <person name="Corby N."/>
            <person name="Coville G.J."/>
            <person name="Davies J."/>
            <person name="Deadman R."/>
            <person name="Dunn M."/>
            <person name="Earthrowl M."/>
            <person name="Ellington A.G."/>
            <person name="Errington H."/>
            <person name="Frankish A."/>
            <person name="Frankland J."/>
            <person name="French L."/>
            <person name="Garner P."/>
            <person name="Garnett J."/>
            <person name="Gay L."/>
            <person name="Ghori M.R.J."/>
            <person name="Gibson R."/>
            <person name="Gilby L.M."/>
            <person name="Gillett W."/>
            <person name="Glithero R.J."/>
            <person name="Grafham D.V."/>
            <person name="Griffiths C."/>
            <person name="Griffiths-Jones S."/>
            <person name="Grocock R."/>
            <person name="Hammond S."/>
            <person name="Harrison E.S.I."/>
            <person name="Hart E."/>
            <person name="Haugen E."/>
            <person name="Heath P.D."/>
            <person name="Holmes S."/>
            <person name="Holt K."/>
            <person name="Howden P.J."/>
            <person name="Hunt A.R."/>
            <person name="Hunt S.E."/>
            <person name="Hunter G."/>
            <person name="Isherwood J."/>
            <person name="James R."/>
            <person name="Johnson C."/>
            <person name="Johnson D."/>
            <person name="Joy A."/>
            <person name="Kay M."/>
            <person name="Kershaw J.K."/>
            <person name="Kibukawa M."/>
            <person name="Kimberley A.M."/>
            <person name="King A."/>
            <person name="Knights A.J."/>
            <person name="Lad H."/>
            <person name="Laird G."/>
            <person name="Lawlor S."/>
            <person name="Leongamornlert D.A."/>
            <person name="Lloyd D.M."/>
            <person name="Loveland J."/>
            <person name="Lovell J."/>
            <person name="Lush M.J."/>
            <person name="Lyne R."/>
            <person name="Martin S."/>
            <person name="Mashreghi-Mohammadi M."/>
            <person name="Matthews L."/>
            <person name="Matthews N.S.W."/>
            <person name="McLaren S."/>
            <person name="Milne S."/>
            <person name="Mistry S."/>
            <person name="Moore M.J.F."/>
            <person name="Nickerson T."/>
            <person name="O'Dell C.N."/>
            <person name="Oliver K."/>
            <person name="Palmeiri A."/>
            <person name="Palmer S.A."/>
            <person name="Parker A."/>
            <person name="Patel D."/>
            <person name="Pearce A.V."/>
            <person name="Peck A.I."/>
            <person name="Pelan S."/>
            <person name="Phelps K."/>
            <person name="Phillimore B.J."/>
            <person name="Plumb R."/>
            <person name="Rajan J."/>
            <person name="Raymond C."/>
            <person name="Rouse G."/>
            <person name="Saenphimmachak C."/>
            <person name="Sehra H.K."/>
            <person name="Sheridan E."/>
            <person name="Shownkeen R."/>
            <person name="Sims S."/>
            <person name="Skuce C.D."/>
            <person name="Smith M."/>
            <person name="Steward C."/>
            <person name="Subramanian S."/>
            <person name="Sycamore N."/>
            <person name="Tracey A."/>
            <person name="Tromans A."/>
            <person name="Van Helmond Z."/>
            <person name="Wall M."/>
            <person name="Wallis J.M."/>
            <person name="White S."/>
            <person name="Whitehead S.L."/>
            <person name="Wilkinson J.E."/>
            <person name="Willey D.L."/>
            <person name="Williams H."/>
            <person name="Wilming L."/>
            <person name="Wray P.W."/>
            <person name="Wu Z."/>
            <person name="Coulson A."/>
            <person name="Vaudin M."/>
            <person name="Sulston J.E."/>
            <person name="Durbin R.M."/>
            <person name="Hubbard T."/>
            <person name="Wooster R."/>
            <person name="Dunham I."/>
            <person name="Carter N.P."/>
            <person name="McVean G."/>
            <person name="Ross M.T."/>
            <person name="Harrow J."/>
            <person name="Olson M.V."/>
            <person name="Beck S."/>
            <person name="Rogers J."/>
            <person name="Bentley D.R."/>
        </authorList>
    </citation>
    <scope>NUCLEOTIDE SEQUENCE [LARGE SCALE GENOMIC DNA]</scope>
</reference>
<reference key="2">
    <citation type="journal article" date="2004" name="Genome Res.">
        <title>The status, quality, and expansion of the NIH full-length cDNA project: the Mammalian Gene Collection (MGC).</title>
        <authorList>
            <consortium name="The MGC Project Team"/>
        </authorList>
    </citation>
    <scope>NUCLEOTIDE SEQUENCE [LARGE SCALE MRNA]</scope>
</reference>
<accession>Q5TYX0</accession>
<accession>A0A087WWD0</accession>
<accession>A2BDD6</accession>
<accession>A4FU31</accession>
<accession>A6NMV5</accession>
<keyword id="KW-0433">Leucine-rich repeat</keyword>
<keyword id="KW-1185">Reference proteome</keyword>
<keyword id="KW-0677">Repeat</keyword>
<gene>
    <name evidence="3" type="primary">PRAMEF5</name>
    <name evidence="3" type="synonym">PRAMEF23</name>
    <name evidence="3" type="synonym">PRAMEF5L</name>
</gene>
<evidence type="ECO:0000250" key="1">
    <source>
        <dbReference type="UniProtKB" id="Q3UWY1"/>
    </source>
</evidence>
<evidence type="ECO:0000305" key="2"/>
<evidence type="ECO:0000312" key="3">
    <source>
        <dbReference type="HGNC" id="HGNC:27995"/>
    </source>
</evidence>
<feature type="chain" id="PRO_0000156979" description="PRAME family member 5">
    <location>
        <begin position="1"/>
        <end position="476"/>
    </location>
</feature>
<feature type="repeat" description="LRR 1; degenerate" evidence="1">
    <location>
        <begin position="97"/>
        <end position="124"/>
    </location>
</feature>
<feature type="repeat" description="LRR 2; degenerate" evidence="1">
    <location>
        <begin position="179"/>
        <end position="203"/>
    </location>
</feature>
<feature type="repeat" description="LRR 3; degenerate" evidence="1">
    <location>
        <begin position="204"/>
        <end position="230"/>
    </location>
</feature>
<feature type="repeat" description="LRR 4; degenerate" evidence="1">
    <location>
        <begin position="231"/>
        <end position="266"/>
    </location>
</feature>
<feature type="repeat" description="LRR 5" evidence="1">
    <location>
        <begin position="267"/>
        <end position="292"/>
    </location>
</feature>
<feature type="repeat" description="LRR 6" evidence="1">
    <location>
        <begin position="293"/>
        <end position="324"/>
    </location>
</feature>
<feature type="repeat" description="LRR 7" evidence="1">
    <location>
        <begin position="325"/>
        <end position="345"/>
    </location>
</feature>
<feature type="repeat" description="LRR 8" evidence="1">
    <location>
        <begin position="349"/>
        <end position="376"/>
    </location>
</feature>
<feature type="repeat" description="LRR 9" evidence="1">
    <location>
        <begin position="377"/>
        <end position="401"/>
    </location>
</feature>
<feature type="sequence conflict" description="In Ref. 2; AAI01345." evidence="2" ref="2">
    <original>S</original>
    <variation>N</variation>
    <location>
        <position position="16"/>
    </location>
</feature>
<feature type="sequence conflict" description="In Ref. 2; AAI30275/AAI30277." evidence="2" ref="2">
    <original>M</original>
    <variation>L</variation>
    <location>
        <position position="41"/>
    </location>
</feature>
<feature type="sequence conflict" description="In Ref. 2; AAI01345/AAI30275/AAI30277." evidence="2" ref="2">
    <original>Q</original>
    <variation>R</variation>
    <location>
        <position position="144"/>
    </location>
</feature>
<feature type="sequence conflict" description="In Ref. 2; AAI01345/AAI30275/AAI30277." evidence="2" ref="2">
    <original>C</original>
    <variation>Y</variation>
    <location>
        <position position="166"/>
    </location>
</feature>
<feature type="sequence conflict" description="In Ref. 2; AAI01345/AAI30275/AAI30277." evidence="2" ref="2">
    <original>L</original>
    <variation>P</variation>
    <location>
        <position position="344"/>
    </location>
</feature>
<feature type="sequence conflict" description="In Ref. 2; AAI30275/AAI30277." evidence="2" ref="2">
    <original>P</original>
    <variation>L</variation>
    <location>
        <position position="416"/>
    </location>
</feature>
<feature type="sequence conflict" description="In Ref. 2; AAI01345/AAI30275/AAI30277." evidence="2" ref="2">
    <original>P</original>
    <variation>A</variation>
    <location>
        <position position="432"/>
    </location>
</feature>
<comment type="similarity">
    <text evidence="2">Belongs to the PRAME family.</text>
</comment>
<proteinExistence type="evidence at transcript level"/>